<accession>P02720</accession>
<accession>Q1LZA5</accession>
<comment type="function">
    <text>Catalyzes the transfer of phosphatidylcholine between membranes. Binds phosphatidylcholine in a tight 1:1 stoichiometric complex.</text>
</comment>
<comment type="subunit">
    <text evidence="1">Interacts with ACOT13/THEM2.</text>
</comment>
<comment type="subcellular location">
    <subcellularLocation>
        <location>Cytoplasm</location>
    </subcellularLocation>
</comment>
<protein>
    <recommendedName>
        <fullName>Phosphatidylcholine transfer protein</fullName>
        <shortName>PC-TP</shortName>
    </recommendedName>
    <alternativeName>
        <fullName>START domain-containing protein 2</fullName>
        <shortName>StARD2</shortName>
    </alternativeName>
    <alternativeName>
        <fullName>StAR-related lipid transfer protein 2</fullName>
    </alternativeName>
</protein>
<name>PPCT_BOVIN</name>
<keyword id="KW-0007">Acetylation</keyword>
<keyword id="KW-0963">Cytoplasm</keyword>
<keyword id="KW-0903">Direct protein sequencing</keyword>
<keyword id="KW-0445">Lipid transport</keyword>
<keyword id="KW-0446">Lipid-binding</keyword>
<keyword id="KW-0597">Phosphoprotein</keyword>
<keyword id="KW-1185">Reference proteome</keyword>
<keyword id="KW-0813">Transport</keyword>
<sequence length="213" mass="24643">MDPGAGAFSEEQFREACAELQRPALSGAAWELLVETQGISVYRLLDQQTGLYAYKVFGVLEDCLPDLLADVYMDLAYRKQWDQYVKELYEKECSGETVVYWQVKYPFPMSNRDYVYVRQRQELDFEGQKVHVILAQSTSEPQFPEKSGVIRVKHYKQRLAIQSDGKRGSKVFMYYFDNPGGQIPSWVINWAAKNGVPNFLKDMVKACQNYKKT</sequence>
<gene>
    <name type="primary">PCTP</name>
    <name type="synonym">STARD2</name>
</gene>
<organism>
    <name type="scientific">Bos taurus</name>
    <name type="common">Bovine</name>
    <dbReference type="NCBI Taxonomy" id="9913"/>
    <lineage>
        <taxon>Eukaryota</taxon>
        <taxon>Metazoa</taxon>
        <taxon>Chordata</taxon>
        <taxon>Craniata</taxon>
        <taxon>Vertebrata</taxon>
        <taxon>Euteleostomi</taxon>
        <taxon>Mammalia</taxon>
        <taxon>Eutheria</taxon>
        <taxon>Laurasiatheria</taxon>
        <taxon>Artiodactyla</taxon>
        <taxon>Ruminantia</taxon>
        <taxon>Pecora</taxon>
        <taxon>Bovidae</taxon>
        <taxon>Bovinae</taxon>
        <taxon>Bos</taxon>
    </lineage>
</organism>
<feature type="chain" id="PRO_0000220657" description="Phosphatidylcholine transfer protein">
    <location>
        <begin position="1"/>
        <end position="213"/>
    </location>
</feature>
<feature type="domain" description="START" evidence="3">
    <location>
        <begin position="1"/>
        <end position="212"/>
    </location>
</feature>
<feature type="region of interest" description="Part of the binding site for phosphatidylcholine">
    <location>
        <begin position="171"/>
        <end position="176"/>
    </location>
</feature>
<feature type="binding site" evidence="1">
    <location>
        <position position="72"/>
    </location>
    <ligand>
        <name>a 1,2-diacyl-sn-glycero-3-phosphocholine</name>
        <dbReference type="ChEBI" id="CHEBI:57643"/>
    </ligand>
</feature>
<feature type="binding site" evidence="1">
    <location>
        <position position="78"/>
    </location>
    <ligand>
        <name>a 1,2-diacyl-sn-glycero-3-phosphocholine</name>
        <dbReference type="ChEBI" id="CHEBI:57643"/>
    </ligand>
</feature>
<feature type="binding site" evidence="1">
    <location>
        <position position="157"/>
    </location>
    <ligand>
        <name>a 1,2-diacyl-sn-glycero-3-phosphocholine</name>
        <dbReference type="ChEBI" id="CHEBI:57643"/>
    </ligand>
</feature>
<feature type="modified residue" description="N-acetylmethionine" evidence="5">
    <location>
        <position position="1"/>
    </location>
</feature>
<feature type="modified residue" description="Phosphoserine" evidence="2">
    <location>
        <position position="139"/>
    </location>
</feature>
<feature type="mutagenesis site" description="Loss of activity." evidence="4">
    <original>K</original>
    <variation>I</variation>
    <location>
        <position position="55"/>
    </location>
</feature>
<feature type="sequence conflict" description="In Ref. 2; CAA90330." evidence="6" ref="2">
    <original>R</original>
    <variation>K</variation>
    <location>
        <position position="167"/>
    </location>
</feature>
<evidence type="ECO:0000250" key="1"/>
<evidence type="ECO:0000250" key="2">
    <source>
        <dbReference type="UniProtKB" id="Q9UKL6"/>
    </source>
</evidence>
<evidence type="ECO:0000255" key="3">
    <source>
        <dbReference type="PROSITE-ProRule" id="PRU00197"/>
    </source>
</evidence>
<evidence type="ECO:0000269" key="4">
    <source>
    </source>
</evidence>
<evidence type="ECO:0000269" key="5">
    <source>
    </source>
</evidence>
<evidence type="ECO:0000305" key="6"/>
<dbReference type="EMBL" id="U21660">
    <property type="protein sequence ID" value="AAA87003.1"/>
    <property type="molecule type" value="mRNA"/>
</dbReference>
<dbReference type="EMBL" id="Z50026">
    <property type="protein sequence ID" value="CAA90330.1"/>
    <property type="molecule type" value="mRNA"/>
</dbReference>
<dbReference type="EMBL" id="BC116120">
    <property type="protein sequence ID" value="AAI16121.1"/>
    <property type="molecule type" value="mRNA"/>
</dbReference>
<dbReference type="PIR" id="A91092">
    <property type="entry name" value="EPBO"/>
</dbReference>
<dbReference type="RefSeq" id="NP_777260.1">
    <property type="nucleotide sequence ID" value="NM_174835.2"/>
</dbReference>
<dbReference type="SMR" id="P02720"/>
<dbReference type="FunCoup" id="P02720">
    <property type="interactions" value="10"/>
</dbReference>
<dbReference type="STRING" id="9913.ENSBTAP00000056915"/>
<dbReference type="iPTMnet" id="P02720"/>
<dbReference type="PaxDb" id="9913-ENSBTAP00000024898"/>
<dbReference type="GeneID" id="317656"/>
<dbReference type="KEGG" id="bta:317656"/>
<dbReference type="CTD" id="58488"/>
<dbReference type="VEuPathDB" id="HostDB:ENSBTAG00000018706"/>
<dbReference type="eggNOG" id="KOG2761">
    <property type="taxonomic scope" value="Eukaryota"/>
</dbReference>
<dbReference type="HOGENOM" id="CLU_042209_1_0_1"/>
<dbReference type="InParanoid" id="P02720"/>
<dbReference type="OMA" id="DYVYMRE"/>
<dbReference type="OrthoDB" id="1295045at2759"/>
<dbReference type="TreeFam" id="TF320705"/>
<dbReference type="Reactome" id="R-BTA-1483191">
    <property type="pathway name" value="Synthesis of PC"/>
</dbReference>
<dbReference type="Reactome" id="R-BTA-77289">
    <property type="pathway name" value="Mitochondrial Fatty Acid Beta-Oxidation"/>
</dbReference>
<dbReference type="Proteomes" id="UP000009136">
    <property type="component" value="Chromosome 19"/>
</dbReference>
<dbReference type="Bgee" id="ENSBTAG00000018706">
    <property type="expression patterns" value="Expressed in liver and 106 other cell types or tissues"/>
</dbReference>
<dbReference type="GO" id="GO:0005737">
    <property type="term" value="C:cytoplasm"/>
    <property type="evidence" value="ECO:0007669"/>
    <property type="project" value="UniProtKB-SubCell"/>
</dbReference>
<dbReference type="GO" id="GO:0031210">
    <property type="term" value="F:phosphatidylcholine binding"/>
    <property type="evidence" value="ECO:0000250"/>
    <property type="project" value="UniProtKB"/>
</dbReference>
<dbReference type="GO" id="GO:0008525">
    <property type="term" value="F:phosphatidylcholine transporter activity"/>
    <property type="evidence" value="ECO:0000250"/>
    <property type="project" value="UniProtKB"/>
</dbReference>
<dbReference type="GO" id="GO:0015914">
    <property type="term" value="P:phospholipid transport"/>
    <property type="evidence" value="ECO:0000250"/>
    <property type="project" value="UniProtKB"/>
</dbReference>
<dbReference type="CDD" id="cd08910">
    <property type="entry name" value="START_STARD2-like"/>
    <property type="match status" value="1"/>
</dbReference>
<dbReference type="FunFam" id="3.30.530.20:FF:000017">
    <property type="entry name" value="Phosphatidylcholine transfer protein, putative"/>
    <property type="match status" value="1"/>
</dbReference>
<dbReference type="Gene3D" id="3.30.530.20">
    <property type="match status" value="1"/>
</dbReference>
<dbReference type="InterPro" id="IPR041950">
    <property type="entry name" value="STARD2_START"/>
</dbReference>
<dbReference type="InterPro" id="IPR023393">
    <property type="entry name" value="START-like_dom_sf"/>
</dbReference>
<dbReference type="InterPro" id="IPR002913">
    <property type="entry name" value="START_lipid-bd_dom"/>
</dbReference>
<dbReference type="InterPro" id="IPR051213">
    <property type="entry name" value="START_lipid_transfer"/>
</dbReference>
<dbReference type="PANTHER" id="PTHR19308">
    <property type="entry name" value="PHOSPHATIDYLCHOLINE TRANSFER PROTEIN"/>
    <property type="match status" value="1"/>
</dbReference>
<dbReference type="PANTHER" id="PTHR19308:SF39">
    <property type="entry name" value="PHOSPHATIDYLCHOLINE TRANSFER PROTEIN"/>
    <property type="match status" value="1"/>
</dbReference>
<dbReference type="Pfam" id="PF01852">
    <property type="entry name" value="START"/>
    <property type="match status" value="1"/>
</dbReference>
<dbReference type="SMART" id="SM00234">
    <property type="entry name" value="START"/>
    <property type="match status" value="1"/>
</dbReference>
<dbReference type="SUPFAM" id="SSF55961">
    <property type="entry name" value="Bet v1-like"/>
    <property type="match status" value="1"/>
</dbReference>
<dbReference type="PROSITE" id="PS50848">
    <property type="entry name" value="START"/>
    <property type="match status" value="1"/>
</dbReference>
<reference key="1">
    <citation type="journal article" date="1995" name="Gene">
        <title>Cloning and characterization of a cDNA encoding the specific phosphatidylcholine transfer protein from bovine liver.</title>
        <authorList>
            <person name="Cohen D.E."/>
            <person name="Green R.M."/>
        </authorList>
    </citation>
    <scope>NUCLEOTIDE SEQUENCE [MRNA]</scope>
    <source>
        <tissue>Liver</tissue>
    </source>
</reference>
<reference key="2">
    <citation type="journal article" date="1996" name="Biochem. J.">
        <title>cDNA cloning and tissue-specific expression of the phosphatidylcholine transfer protein gene.</title>
        <authorList>
            <person name="Geijtenbeek T.B.H."/>
            <person name="Smith A.J."/>
            <person name="Borst P."/>
            <person name="Wirtz K.W.A."/>
        </authorList>
    </citation>
    <scope>NUCLEOTIDE SEQUENCE [MRNA]</scope>
    <source>
        <tissue>Liver</tissue>
    </source>
</reference>
<reference key="3">
    <citation type="submission" date="2006-05" db="EMBL/GenBank/DDBJ databases">
        <authorList>
            <consortium name="NIH - Mammalian Gene Collection (MGC) project"/>
        </authorList>
    </citation>
    <scope>NUCLEOTIDE SEQUENCE [LARGE SCALE MRNA]</scope>
    <source>
        <strain>Hereford</strain>
        <tissue>Ascending colon</tissue>
    </source>
</reference>
<reference key="4">
    <citation type="journal article" date="1980" name="Eur. J. Biochem.">
        <title>The primary structure of the phosphatidylcholine-exchange protein from bovine liver. Isolation and characterization of the staphylococcal protease peptides and the amino-acid sequence of the N-terminal half (residues 1-122).</title>
        <authorList>
            <person name="Moonen P."/>
            <person name="Akeroyd R."/>
            <person name="Westerman J."/>
            <person name="Puyk W.C."/>
            <person name="Smits P."/>
            <person name="Wirtz K.W.A."/>
        </authorList>
    </citation>
    <scope>PROTEIN SEQUENCE OF 1-122</scope>
    <scope>ACETYLATION AT MET-1</scope>
</reference>
<reference key="5">
    <citation type="journal article" date="1981" name="Eur. J. Biochem.">
        <title>The complete primary structure of the phosphatidylcholine-transfer protein from bovine liver. Isolation and characterization of the cyanogen bromide peptides.</title>
        <authorList>
            <person name="Akeroyd R."/>
            <person name="Moonen P."/>
            <person name="Westerman J."/>
            <person name="Puyk W.C."/>
            <person name="Wirtz K.W.A."/>
        </authorList>
    </citation>
    <scope>PROTEIN SEQUENCE OF 110-213</scope>
</reference>
<reference key="6">
    <citation type="journal article" date="1979" name="Eur. J. Biochem.">
        <title>Determination of the hydrophobic binding site of phosphatidylcholine exchange protein with photosensitive phosphatidylcholine.</title>
        <authorList>
            <person name="Moonen P."/>
            <person name="Haagsman H.P."/>
            <person name="van Deenen L.L.M."/>
            <person name="Wirtz K.W.A."/>
        </authorList>
    </citation>
    <scope>PROTEIN SEQUENCE OF 146-183</scope>
</reference>
<reference key="7">
    <citation type="journal article" date="2001" name="Chem. Phys. Lipids">
        <title>The binding of phosphatidylcholine to the phosphatidylcholine transfer protein: affinity and role in folding.</title>
        <authorList>
            <person name="de Brouwer A.P."/>
            <person name="Bouma B."/>
            <person name="van Tiel C.M."/>
            <person name="Heerma W."/>
            <person name="Brouwers J.F."/>
            <person name="Bevers L.E."/>
            <person name="Westerman J."/>
            <person name="Roelofsen B."/>
            <person name="Wirtz K.W."/>
        </authorList>
    </citation>
    <scope>MUTAGENESIS OF LYS-55</scope>
</reference>
<proteinExistence type="evidence at protein level"/>